<proteinExistence type="inferred from homology"/>
<gene>
    <name evidence="1" type="primary">rpsE</name>
    <name type="ordered locus">SPAB_04264</name>
</gene>
<keyword id="KW-0687">Ribonucleoprotein</keyword>
<keyword id="KW-0689">Ribosomal protein</keyword>
<keyword id="KW-0694">RNA-binding</keyword>
<keyword id="KW-0699">rRNA-binding</keyword>
<comment type="function">
    <text evidence="1">With S4 and S12 plays an important role in translational accuracy.</text>
</comment>
<comment type="function">
    <text evidence="1">Located at the back of the 30S subunit body where it stabilizes the conformation of the head with respect to the body.</text>
</comment>
<comment type="subunit">
    <text evidence="1">Part of the 30S ribosomal subunit. Contacts proteins S4 and S8.</text>
</comment>
<comment type="domain">
    <text>The N-terminal domain interacts with the head of the 30S subunit; the C-terminal domain interacts with the body and contacts protein S4. The interaction surface between S4 and S5 is involved in control of translational fidelity.</text>
</comment>
<comment type="similarity">
    <text evidence="1">Belongs to the universal ribosomal protein uS5 family.</text>
</comment>
<feature type="chain" id="PRO_1000086053" description="Small ribosomal subunit protein uS5">
    <location>
        <begin position="1"/>
        <end position="167"/>
    </location>
</feature>
<feature type="domain" description="S5 DRBM" evidence="1">
    <location>
        <begin position="11"/>
        <end position="74"/>
    </location>
</feature>
<accession>A9MSY1</accession>
<sequence length="167" mass="17603">MAHIEKQAGELQEKLIAVNRVSKTVKGGRIFSFTALTVVGDGNGRVGFGYGKAREVPAAIQKAMEKARRNMINVALNNGTLQHPVKGVHTGSRVFMQPASEGTGIIAGGAMRAVLEVAGVHNVLAKAYGSTNPINVVRATIDGLENMNSPEMVAAKRGKSVEEILGK</sequence>
<dbReference type="EMBL" id="CP000886">
    <property type="protein sequence ID" value="ABX69581.1"/>
    <property type="molecule type" value="Genomic_DNA"/>
</dbReference>
<dbReference type="RefSeq" id="WP_000940121.1">
    <property type="nucleotide sequence ID" value="NC_010102.1"/>
</dbReference>
<dbReference type="SMR" id="A9MSY1"/>
<dbReference type="GeneID" id="93778684"/>
<dbReference type="KEGG" id="spq:SPAB_04264"/>
<dbReference type="PATRIC" id="fig|1016998.12.peg.4010"/>
<dbReference type="HOGENOM" id="CLU_065898_2_2_6"/>
<dbReference type="BioCyc" id="SENT1016998:SPAB_RS17350-MONOMER"/>
<dbReference type="Proteomes" id="UP000008556">
    <property type="component" value="Chromosome"/>
</dbReference>
<dbReference type="GO" id="GO:0015935">
    <property type="term" value="C:small ribosomal subunit"/>
    <property type="evidence" value="ECO:0007669"/>
    <property type="project" value="InterPro"/>
</dbReference>
<dbReference type="GO" id="GO:0019843">
    <property type="term" value="F:rRNA binding"/>
    <property type="evidence" value="ECO:0007669"/>
    <property type="project" value="UniProtKB-UniRule"/>
</dbReference>
<dbReference type="GO" id="GO:0003735">
    <property type="term" value="F:structural constituent of ribosome"/>
    <property type="evidence" value="ECO:0007669"/>
    <property type="project" value="InterPro"/>
</dbReference>
<dbReference type="GO" id="GO:0006412">
    <property type="term" value="P:translation"/>
    <property type="evidence" value="ECO:0007669"/>
    <property type="project" value="UniProtKB-UniRule"/>
</dbReference>
<dbReference type="FunFam" id="3.30.160.20:FF:000001">
    <property type="entry name" value="30S ribosomal protein S5"/>
    <property type="match status" value="1"/>
</dbReference>
<dbReference type="FunFam" id="3.30.230.10:FF:000002">
    <property type="entry name" value="30S ribosomal protein S5"/>
    <property type="match status" value="1"/>
</dbReference>
<dbReference type="Gene3D" id="3.30.160.20">
    <property type="match status" value="1"/>
</dbReference>
<dbReference type="Gene3D" id="3.30.230.10">
    <property type="match status" value="1"/>
</dbReference>
<dbReference type="HAMAP" id="MF_01307_B">
    <property type="entry name" value="Ribosomal_uS5_B"/>
    <property type="match status" value="1"/>
</dbReference>
<dbReference type="InterPro" id="IPR020568">
    <property type="entry name" value="Ribosomal_Su5_D2-typ_SF"/>
</dbReference>
<dbReference type="InterPro" id="IPR000851">
    <property type="entry name" value="Ribosomal_uS5"/>
</dbReference>
<dbReference type="InterPro" id="IPR005712">
    <property type="entry name" value="Ribosomal_uS5_bac-type"/>
</dbReference>
<dbReference type="InterPro" id="IPR005324">
    <property type="entry name" value="Ribosomal_uS5_C"/>
</dbReference>
<dbReference type="InterPro" id="IPR013810">
    <property type="entry name" value="Ribosomal_uS5_N"/>
</dbReference>
<dbReference type="InterPro" id="IPR018192">
    <property type="entry name" value="Ribosomal_uS5_N_CS"/>
</dbReference>
<dbReference type="InterPro" id="IPR014721">
    <property type="entry name" value="Ribsml_uS5_D2-typ_fold_subgr"/>
</dbReference>
<dbReference type="NCBIfam" id="TIGR01021">
    <property type="entry name" value="rpsE_bact"/>
    <property type="match status" value="1"/>
</dbReference>
<dbReference type="PANTHER" id="PTHR48277">
    <property type="entry name" value="MITOCHONDRIAL RIBOSOMAL PROTEIN S5"/>
    <property type="match status" value="1"/>
</dbReference>
<dbReference type="PANTHER" id="PTHR48277:SF1">
    <property type="entry name" value="MITOCHONDRIAL RIBOSOMAL PROTEIN S5"/>
    <property type="match status" value="1"/>
</dbReference>
<dbReference type="Pfam" id="PF00333">
    <property type="entry name" value="Ribosomal_S5"/>
    <property type="match status" value="1"/>
</dbReference>
<dbReference type="Pfam" id="PF03719">
    <property type="entry name" value="Ribosomal_S5_C"/>
    <property type="match status" value="1"/>
</dbReference>
<dbReference type="SUPFAM" id="SSF54768">
    <property type="entry name" value="dsRNA-binding domain-like"/>
    <property type="match status" value="1"/>
</dbReference>
<dbReference type="SUPFAM" id="SSF54211">
    <property type="entry name" value="Ribosomal protein S5 domain 2-like"/>
    <property type="match status" value="1"/>
</dbReference>
<dbReference type="PROSITE" id="PS00585">
    <property type="entry name" value="RIBOSOMAL_S5"/>
    <property type="match status" value="1"/>
</dbReference>
<dbReference type="PROSITE" id="PS50881">
    <property type="entry name" value="S5_DSRBD"/>
    <property type="match status" value="1"/>
</dbReference>
<protein>
    <recommendedName>
        <fullName evidence="1">Small ribosomal subunit protein uS5</fullName>
    </recommendedName>
    <alternativeName>
        <fullName evidence="2">30S ribosomal protein S5</fullName>
    </alternativeName>
</protein>
<organism>
    <name type="scientific">Salmonella paratyphi B (strain ATCC BAA-1250 / SPB7)</name>
    <dbReference type="NCBI Taxonomy" id="1016998"/>
    <lineage>
        <taxon>Bacteria</taxon>
        <taxon>Pseudomonadati</taxon>
        <taxon>Pseudomonadota</taxon>
        <taxon>Gammaproteobacteria</taxon>
        <taxon>Enterobacterales</taxon>
        <taxon>Enterobacteriaceae</taxon>
        <taxon>Salmonella</taxon>
    </lineage>
</organism>
<reference key="1">
    <citation type="submission" date="2007-11" db="EMBL/GenBank/DDBJ databases">
        <authorList>
            <consortium name="The Salmonella enterica serovar Paratyphi B Genome Sequencing Project"/>
            <person name="McClelland M."/>
            <person name="Sanderson E.K."/>
            <person name="Porwollik S."/>
            <person name="Spieth J."/>
            <person name="Clifton W.S."/>
            <person name="Fulton R."/>
            <person name="Cordes M."/>
            <person name="Wollam A."/>
            <person name="Shah N."/>
            <person name="Pepin K."/>
            <person name="Bhonagiri V."/>
            <person name="Nash W."/>
            <person name="Johnson M."/>
            <person name="Thiruvilangam P."/>
            <person name="Wilson R."/>
        </authorList>
    </citation>
    <scope>NUCLEOTIDE SEQUENCE [LARGE SCALE GENOMIC DNA]</scope>
    <source>
        <strain>ATCC BAA-1250 / SPB7</strain>
    </source>
</reference>
<evidence type="ECO:0000255" key="1">
    <source>
        <dbReference type="HAMAP-Rule" id="MF_01307"/>
    </source>
</evidence>
<evidence type="ECO:0000305" key="2"/>
<name>RS5_SALPB</name>